<feature type="chain" id="PRO_1000023046" description="UDP-N-acetylglucosamine 1-carboxyvinyltransferase">
    <location>
        <begin position="1"/>
        <end position="426"/>
    </location>
</feature>
<feature type="active site" description="Proton donor" evidence="1">
    <location>
        <position position="118"/>
    </location>
</feature>
<feature type="binding site" evidence="1">
    <location>
        <begin position="22"/>
        <end position="23"/>
    </location>
    <ligand>
        <name>phosphoenolpyruvate</name>
        <dbReference type="ChEBI" id="CHEBI:58702"/>
    </ligand>
</feature>
<feature type="binding site" evidence="1">
    <location>
        <position position="94"/>
    </location>
    <ligand>
        <name>UDP-N-acetyl-alpha-D-glucosamine</name>
        <dbReference type="ChEBI" id="CHEBI:57705"/>
    </ligand>
</feature>
<feature type="binding site" evidence="1">
    <location>
        <begin position="123"/>
        <end position="127"/>
    </location>
    <ligand>
        <name>UDP-N-acetyl-alpha-D-glucosamine</name>
        <dbReference type="ChEBI" id="CHEBI:57705"/>
    </ligand>
</feature>
<feature type="binding site" evidence="1">
    <location>
        <position position="310"/>
    </location>
    <ligand>
        <name>UDP-N-acetyl-alpha-D-glucosamine</name>
        <dbReference type="ChEBI" id="CHEBI:57705"/>
    </ligand>
</feature>
<feature type="binding site" evidence="1">
    <location>
        <position position="332"/>
    </location>
    <ligand>
        <name>UDP-N-acetyl-alpha-D-glucosamine</name>
        <dbReference type="ChEBI" id="CHEBI:57705"/>
    </ligand>
</feature>
<feature type="modified residue" description="2-(S-cysteinyl)pyruvic acid O-phosphothioketal" evidence="1">
    <location>
        <position position="118"/>
    </location>
</feature>
<gene>
    <name evidence="1" type="primary">murA</name>
    <name type="ordered locus">HNE_1344</name>
</gene>
<name>MURA_HYPNA</name>
<sequence length="426" mass="44849">MDRLHIIGGSPLSGRIPVSGAKNSALKLMVACLLTDQPIEFTNMPNLADTRFLAQLLETLGVEVYWPRGSSTCHLNAAELKSTIAPYEQVRKMRASFNVLGPLVARSGHATVSLPGGCAIGARPVDLHLQALEAMGADLRVEQGYVKAAAIHGLKGAHINFSTVSVGATEHTMLAATLAKGETILENAAREPEIEDLAHCLNQMGAQITGAGTPIIRIKGVEALKGTTYSVMPDRIEAGTFAMAAAAAGGDVTLDGAPVAALGAMIAKLREAGVTVDADEAASTIRIRRNGTPLKAVSLSTQPHPGFPTDLQAQFMALMTLASGTSIIRETIFENRFMHAPELARLGADITVRGQEAVVKGVAQLTAAPVMATDLRASVSLVIAGLAAQGETVVNRIYHLDRGFERLEEKLGACGARIERRSGEEE</sequence>
<keyword id="KW-0131">Cell cycle</keyword>
<keyword id="KW-0132">Cell division</keyword>
<keyword id="KW-0133">Cell shape</keyword>
<keyword id="KW-0961">Cell wall biogenesis/degradation</keyword>
<keyword id="KW-0963">Cytoplasm</keyword>
<keyword id="KW-0573">Peptidoglycan synthesis</keyword>
<keyword id="KW-0670">Pyruvate</keyword>
<keyword id="KW-1185">Reference proteome</keyword>
<keyword id="KW-0808">Transferase</keyword>
<accession>Q0C2I2</accession>
<protein>
    <recommendedName>
        <fullName evidence="1">UDP-N-acetylglucosamine 1-carboxyvinyltransferase</fullName>
        <ecNumber evidence="1">2.5.1.7</ecNumber>
    </recommendedName>
    <alternativeName>
        <fullName evidence="1">Enoylpyruvate transferase</fullName>
    </alternativeName>
    <alternativeName>
        <fullName evidence="1">UDP-N-acetylglucosamine enolpyruvyl transferase</fullName>
        <shortName evidence="1">EPT</shortName>
    </alternativeName>
</protein>
<organism>
    <name type="scientific">Hyphomonas neptunium (strain ATCC 15444)</name>
    <dbReference type="NCBI Taxonomy" id="228405"/>
    <lineage>
        <taxon>Bacteria</taxon>
        <taxon>Pseudomonadati</taxon>
        <taxon>Pseudomonadota</taxon>
        <taxon>Alphaproteobacteria</taxon>
        <taxon>Hyphomonadales</taxon>
        <taxon>Hyphomonadaceae</taxon>
        <taxon>Hyphomonas</taxon>
    </lineage>
</organism>
<evidence type="ECO:0000255" key="1">
    <source>
        <dbReference type="HAMAP-Rule" id="MF_00111"/>
    </source>
</evidence>
<reference key="1">
    <citation type="journal article" date="2006" name="J. Bacteriol.">
        <title>Comparative genomic evidence for a close relationship between the dimorphic prosthecate bacteria Hyphomonas neptunium and Caulobacter crescentus.</title>
        <authorList>
            <person name="Badger J.H."/>
            <person name="Hoover T.R."/>
            <person name="Brun Y.V."/>
            <person name="Weiner R.M."/>
            <person name="Laub M.T."/>
            <person name="Alexandre G."/>
            <person name="Mrazek J."/>
            <person name="Ren Q."/>
            <person name="Paulsen I.T."/>
            <person name="Nelson K.E."/>
            <person name="Khouri H.M."/>
            <person name="Radune D."/>
            <person name="Sosa J."/>
            <person name="Dodson R.J."/>
            <person name="Sullivan S.A."/>
            <person name="Rosovitz M.J."/>
            <person name="Madupu R."/>
            <person name="Brinkac L.M."/>
            <person name="Durkin A.S."/>
            <person name="Daugherty S.C."/>
            <person name="Kothari S.P."/>
            <person name="Giglio M.G."/>
            <person name="Zhou L."/>
            <person name="Haft D.H."/>
            <person name="Selengut J.D."/>
            <person name="Davidsen T.M."/>
            <person name="Yang Q."/>
            <person name="Zafar N."/>
            <person name="Ward N.L."/>
        </authorList>
    </citation>
    <scope>NUCLEOTIDE SEQUENCE [LARGE SCALE GENOMIC DNA]</scope>
    <source>
        <strain>ATCC 15444</strain>
    </source>
</reference>
<dbReference type="EC" id="2.5.1.7" evidence="1"/>
<dbReference type="EMBL" id="CP000158">
    <property type="protein sequence ID" value="ABI75459.1"/>
    <property type="molecule type" value="Genomic_DNA"/>
</dbReference>
<dbReference type="RefSeq" id="WP_011646361.1">
    <property type="nucleotide sequence ID" value="NC_008358.1"/>
</dbReference>
<dbReference type="SMR" id="Q0C2I2"/>
<dbReference type="STRING" id="228405.HNE_1344"/>
<dbReference type="KEGG" id="hne:HNE_1344"/>
<dbReference type="eggNOG" id="COG0766">
    <property type="taxonomic scope" value="Bacteria"/>
</dbReference>
<dbReference type="HOGENOM" id="CLU_027387_0_0_5"/>
<dbReference type="UniPathway" id="UPA00219"/>
<dbReference type="Proteomes" id="UP000001959">
    <property type="component" value="Chromosome"/>
</dbReference>
<dbReference type="GO" id="GO:0005737">
    <property type="term" value="C:cytoplasm"/>
    <property type="evidence" value="ECO:0007669"/>
    <property type="project" value="UniProtKB-SubCell"/>
</dbReference>
<dbReference type="GO" id="GO:0008760">
    <property type="term" value="F:UDP-N-acetylglucosamine 1-carboxyvinyltransferase activity"/>
    <property type="evidence" value="ECO:0007669"/>
    <property type="project" value="UniProtKB-UniRule"/>
</dbReference>
<dbReference type="GO" id="GO:0051301">
    <property type="term" value="P:cell division"/>
    <property type="evidence" value="ECO:0007669"/>
    <property type="project" value="UniProtKB-KW"/>
</dbReference>
<dbReference type="GO" id="GO:0071555">
    <property type="term" value="P:cell wall organization"/>
    <property type="evidence" value="ECO:0007669"/>
    <property type="project" value="UniProtKB-KW"/>
</dbReference>
<dbReference type="GO" id="GO:0009252">
    <property type="term" value="P:peptidoglycan biosynthetic process"/>
    <property type="evidence" value="ECO:0007669"/>
    <property type="project" value="UniProtKB-UniRule"/>
</dbReference>
<dbReference type="GO" id="GO:0008360">
    <property type="term" value="P:regulation of cell shape"/>
    <property type="evidence" value="ECO:0007669"/>
    <property type="project" value="UniProtKB-KW"/>
</dbReference>
<dbReference type="GO" id="GO:0019277">
    <property type="term" value="P:UDP-N-acetylgalactosamine biosynthetic process"/>
    <property type="evidence" value="ECO:0007669"/>
    <property type="project" value="InterPro"/>
</dbReference>
<dbReference type="CDD" id="cd01555">
    <property type="entry name" value="UdpNAET"/>
    <property type="match status" value="1"/>
</dbReference>
<dbReference type="FunFam" id="3.65.10.10:FF:000001">
    <property type="entry name" value="UDP-N-acetylglucosamine 1-carboxyvinyltransferase"/>
    <property type="match status" value="1"/>
</dbReference>
<dbReference type="Gene3D" id="3.65.10.10">
    <property type="entry name" value="Enolpyruvate transferase domain"/>
    <property type="match status" value="2"/>
</dbReference>
<dbReference type="HAMAP" id="MF_00111">
    <property type="entry name" value="MurA"/>
    <property type="match status" value="1"/>
</dbReference>
<dbReference type="InterPro" id="IPR001986">
    <property type="entry name" value="Enolpyruvate_Tfrase_dom"/>
</dbReference>
<dbReference type="InterPro" id="IPR036968">
    <property type="entry name" value="Enolpyruvate_Tfrase_sf"/>
</dbReference>
<dbReference type="InterPro" id="IPR050068">
    <property type="entry name" value="MurA_subfamily"/>
</dbReference>
<dbReference type="InterPro" id="IPR013792">
    <property type="entry name" value="RNA3'P_cycl/enolpyr_Trfase_a/b"/>
</dbReference>
<dbReference type="InterPro" id="IPR005750">
    <property type="entry name" value="UDP_GlcNAc_COvinyl_MurA"/>
</dbReference>
<dbReference type="NCBIfam" id="TIGR01072">
    <property type="entry name" value="murA"/>
    <property type="match status" value="1"/>
</dbReference>
<dbReference type="NCBIfam" id="NF006873">
    <property type="entry name" value="PRK09369.1"/>
    <property type="match status" value="1"/>
</dbReference>
<dbReference type="PANTHER" id="PTHR43783">
    <property type="entry name" value="UDP-N-ACETYLGLUCOSAMINE 1-CARBOXYVINYLTRANSFERASE"/>
    <property type="match status" value="1"/>
</dbReference>
<dbReference type="PANTHER" id="PTHR43783:SF1">
    <property type="entry name" value="UDP-N-ACETYLGLUCOSAMINE 1-CARBOXYVINYLTRANSFERASE"/>
    <property type="match status" value="1"/>
</dbReference>
<dbReference type="Pfam" id="PF00275">
    <property type="entry name" value="EPSP_synthase"/>
    <property type="match status" value="1"/>
</dbReference>
<dbReference type="SUPFAM" id="SSF55205">
    <property type="entry name" value="EPT/RTPC-like"/>
    <property type="match status" value="1"/>
</dbReference>
<comment type="function">
    <text evidence="1">Cell wall formation. Adds enolpyruvyl to UDP-N-acetylglucosamine.</text>
</comment>
<comment type="catalytic activity">
    <reaction evidence="1">
        <text>phosphoenolpyruvate + UDP-N-acetyl-alpha-D-glucosamine = UDP-N-acetyl-3-O-(1-carboxyvinyl)-alpha-D-glucosamine + phosphate</text>
        <dbReference type="Rhea" id="RHEA:18681"/>
        <dbReference type="ChEBI" id="CHEBI:43474"/>
        <dbReference type="ChEBI" id="CHEBI:57705"/>
        <dbReference type="ChEBI" id="CHEBI:58702"/>
        <dbReference type="ChEBI" id="CHEBI:68483"/>
        <dbReference type="EC" id="2.5.1.7"/>
    </reaction>
</comment>
<comment type="pathway">
    <text evidence="1">Cell wall biogenesis; peptidoglycan biosynthesis.</text>
</comment>
<comment type="subcellular location">
    <subcellularLocation>
        <location evidence="1">Cytoplasm</location>
    </subcellularLocation>
</comment>
<comment type="similarity">
    <text evidence="1">Belongs to the EPSP synthase family. MurA subfamily.</text>
</comment>
<proteinExistence type="inferred from homology"/>